<sequence length="653" mass="75792">MGCSSSSTKTRRSDTSLRAALIIQNWYRGYKARLKARQHYALTIFQSIEYADEQGQMQLSTFFSFMLENYTHIHKEELELRNQSLESEQDMRDRWDYVDSIDVPDSYNGPRLQFPLTCTDIDLLLEAFKEQQILHAHYVLEVLFETKKVLKQMPNFTHIQTSPSKEVTICGDLHGKLDDLFLIFYKNGLPSERNPYVFNGDFVDRGKNSIEILMILCVSFLVYPNDLHLNRGNHEDFMMNLRYGFTKEILHKYKLHGKRILQILEEFYAWLPIGTIVDNEILVIHGGISETTDLNLLHRVERNKMKSVLIPPTETNRDHDTDSKHNKVGVTFNAHGRIKTNGSPTEHLTEHEWEQIIDILWSDPRGKNGCFPNTCRGGGCYFGPDVTSKILNKYQLKMLIRSHECKPEGYEICHDGKVVTIFSASNYYEEGSNRGAYIKLCSGTTPRFFQYQVTKATCFQPLRQRVDTMENSAIKILRERVISRKSDLTRAFQLQDHRKSGKLSVSQWAFCMENILGLNLPWRSLSSNLVNIDQNGNVEYMSSFQNIRIEKPVQEAHSTLVETLYRYRSDLEIIFNAIDTDHSGLISVEEFRAMWKLFSSHYNVHIDDSQVNKLANIMDLNKDGSIDFNEFLKAFYVVHRYEDLMKPDVTNLG</sequence>
<dbReference type="EC" id="3.1.3.16"/>
<dbReference type="EMBL" id="AF023455">
    <property type="protein sequence ID" value="AAB82795.1"/>
    <property type="molecule type" value="mRNA"/>
</dbReference>
<dbReference type="EMBL" id="X97867">
    <property type="protein sequence ID" value="CAA66461.1"/>
    <property type="molecule type" value="mRNA"/>
</dbReference>
<dbReference type="EMBL" id="AF027977">
    <property type="protein sequence ID" value="AAC05825.1"/>
    <property type="molecule type" value="mRNA"/>
</dbReference>
<dbReference type="EMBL" id="AK290463">
    <property type="protein sequence ID" value="BAF83152.1"/>
    <property type="molecule type" value="mRNA"/>
</dbReference>
<dbReference type="EMBL" id="AL096700">
    <property type="status" value="NOT_ANNOTATED_CDS"/>
    <property type="molecule type" value="Genomic_DNA"/>
</dbReference>
<dbReference type="EMBL" id="Z94056">
    <property type="status" value="NOT_ANNOTATED_CDS"/>
    <property type="molecule type" value="Genomic_DNA"/>
</dbReference>
<dbReference type="EMBL" id="CH471074">
    <property type="protein sequence ID" value="EAW98944.1"/>
    <property type="molecule type" value="Genomic_DNA"/>
</dbReference>
<dbReference type="EMBL" id="BC036026">
    <property type="protein sequence ID" value="AAH36026.1"/>
    <property type="molecule type" value="mRNA"/>
</dbReference>
<dbReference type="CCDS" id="CCDS14188.1">
    <molecule id="O14829-1"/>
</dbReference>
<dbReference type="CCDS" id="CCDS43920.1">
    <molecule id="O14829-5"/>
</dbReference>
<dbReference type="RefSeq" id="NP_001364915.1">
    <molecule id="O14829-1"/>
    <property type="nucleotide sequence ID" value="NM_001377986.2"/>
</dbReference>
<dbReference type="RefSeq" id="NP_001364922.1">
    <molecule id="O14829-1"/>
    <property type="nucleotide sequence ID" value="NM_001377993.1"/>
</dbReference>
<dbReference type="RefSeq" id="NP_001364925.1">
    <molecule id="O14829-1"/>
    <property type="nucleotide sequence ID" value="NM_001377996.1"/>
</dbReference>
<dbReference type="RefSeq" id="NP_001365310.1">
    <molecule id="O14829-1"/>
    <property type="nucleotide sequence ID" value="NM_001378381.1"/>
</dbReference>
<dbReference type="RefSeq" id="NP_001376549.1">
    <molecule id="O14829-1"/>
    <property type="nucleotide sequence ID" value="NM_001389620.1"/>
</dbReference>
<dbReference type="RefSeq" id="NP_001376550.1">
    <molecule id="O14829-1"/>
    <property type="nucleotide sequence ID" value="NM_001389621.1"/>
</dbReference>
<dbReference type="RefSeq" id="NP_001376552.1">
    <molecule id="O14829-5"/>
    <property type="nucleotide sequence ID" value="NM_001389623.1"/>
</dbReference>
<dbReference type="RefSeq" id="NP_006231.2">
    <molecule id="O14829-1"/>
    <property type="nucleotide sequence ID" value="NM_006240.2"/>
</dbReference>
<dbReference type="RefSeq" id="NP_689410.1">
    <molecule id="O14829-3"/>
    <property type="nucleotide sequence ID" value="NM_152224.2"/>
</dbReference>
<dbReference type="RefSeq" id="NP_689412.1">
    <molecule id="O14829-5"/>
    <property type="nucleotide sequence ID" value="NM_152226.2"/>
</dbReference>
<dbReference type="RefSeq" id="XP_005274610.1">
    <property type="nucleotide sequence ID" value="XM_005274553.2"/>
</dbReference>
<dbReference type="RefSeq" id="XP_047298148.1">
    <molecule id="O14829-1"/>
    <property type="nucleotide sequence ID" value="XM_047442192.1"/>
</dbReference>
<dbReference type="RefSeq" id="XP_047298149.1">
    <molecule id="O14829-1"/>
    <property type="nucleotide sequence ID" value="XM_047442193.1"/>
</dbReference>
<dbReference type="RefSeq" id="XP_047298150.1">
    <molecule id="O14829-1"/>
    <property type="nucleotide sequence ID" value="XM_047442194.1"/>
</dbReference>
<dbReference type="RefSeq" id="XP_047298151.1">
    <molecule id="O14829-1"/>
    <property type="nucleotide sequence ID" value="XM_047442195.1"/>
</dbReference>
<dbReference type="RefSeq" id="XP_054183261.1">
    <molecule id="O14829-1"/>
    <property type="nucleotide sequence ID" value="XM_054327286.1"/>
</dbReference>
<dbReference type="RefSeq" id="XP_054183262.1">
    <molecule id="O14829-1"/>
    <property type="nucleotide sequence ID" value="XM_054327287.1"/>
</dbReference>
<dbReference type="RefSeq" id="XP_054183263.1">
    <molecule id="O14829-1"/>
    <property type="nucleotide sequence ID" value="XM_054327288.1"/>
</dbReference>
<dbReference type="RefSeq" id="XP_054183264.1">
    <molecule id="O14829-1"/>
    <property type="nucleotide sequence ID" value="XM_054327289.1"/>
</dbReference>
<dbReference type="EMDB" id="EMD-29957"/>
<dbReference type="EMDB" id="EMD-29973"/>
<dbReference type="EMDB" id="EMD-29976"/>
<dbReference type="SMR" id="O14829"/>
<dbReference type="BioGRID" id="111471">
    <property type="interactions" value="51"/>
</dbReference>
<dbReference type="FunCoup" id="O14829">
    <property type="interactions" value="762"/>
</dbReference>
<dbReference type="IntAct" id="O14829">
    <property type="interactions" value="53"/>
</dbReference>
<dbReference type="MINT" id="O14829"/>
<dbReference type="STRING" id="9606.ENSP00000354871"/>
<dbReference type="BindingDB" id="O14829"/>
<dbReference type="ChEMBL" id="CHEMBL5465274"/>
<dbReference type="DEPOD" id="PPEF1"/>
<dbReference type="GlyGen" id="O14829">
    <property type="glycosylation" value="1 site, 1 O-linked glycan (1 site)"/>
</dbReference>
<dbReference type="iPTMnet" id="O14829"/>
<dbReference type="PhosphoSitePlus" id="O14829"/>
<dbReference type="BioMuta" id="PPEF1"/>
<dbReference type="jPOST" id="O14829"/>
<dbReference type="MassIVE" id="O14829"/>
<dbReference type="PaxDb" id="9606-ENSP00000354871"/>
<dbReference type="PeptideAtlas" id="O14829"/>
<dbReference type="ProteomicsDB" id="48261">
    <molecule id="O14829-1"/>
</dbReference>
<dbReference type="ProteomicsDB" id="48262">
    <molecule id="O14829-2"/>
</dbReference>
<dbReference type="ProteomicsDB" id="48263">
    <molecule id="O14829-3"/>
</dbReference>
<dbReference type="ProteomicsDB" id="48264">
    <molecule id="O14829-4"/>
</dbReference>
<dbReference type="ProteomicsDB" id="48265">
    <molecule id="O14829-5"/>
</dbReference>
<dbReference type="Antibodypedia" id="24151">
    <property type="antibodies" value="164 antibodies from 23 providers"/>
</dbReference>
<dbReference type="DNASU" id="5475"/>
<dbReference type="Ensembl" id="ENST00000349874.10">
    <molecule id="O14829-5"/>
    <property type="protein sequence ID" value="ENSP00000341892.5"/>
    <property type="gene ID" value="ENSG00000086717.19"/>
</dbReference>
<dbReference type="Ensembl" id="ENST00000361511.9">
    <molecule id="O14829-1"/>
    <property type="protein sequence ID" value="ENSP00000354871.3"/>
    <property type="gene ID" value="ENSG00000086717.19"/>
</dbReference>
<dbReference type="Ensembl" id="ENST00000470157.2">
    <molecule id="O14829-1"/>
    <property type="protein sequence ID" value="ENSP00000419273.2"/>
    <property type="gene ID" value="ENSG00000086717.19"/>
</dbReference>
<dbReference type="Ensembl" id="ENST00000471570.6">
    <molecule id="O14829-1"/>
    <property type="protein sequence ID" value="ENSP00000509623.1"/>
    <property type="gene ID" value="ENSG00000086717.19"/>
</dbReference>
<dbReference type="Ensembl" id="ENST00000689646.1">
    <molecule id="O14829-1"/>
    <property type="protein sequence ID" value="ENSP00000509616.1"/>
    <property type="gene ID" value="ENSG00000086717.19"/>
</dbReference>
<dbReference type="Ensembl" id="ENST00000692488.1">
    <molecule id="O14829-1"/>
    <property type="protein sequence ID" value="ENSP00000510505.1"/>
    <property type="gene ID" value="ENSG00000086717.19"/>
</dbReference>
<dbReference type="GeneID" id="5475"/>
<dbReference type="KEGG" id="hsa:5475"/>
<dbReference type="MANE-Select" id="ENST00000470157.2">
    <property type="protein sequence ID" value="ENSP00000419273.2"/>
    <property type="RefSeq nucleotide sequence ID" value="NM_001377996.1"/>
    <property type="RefSeq protein sequence ID" value="NP_001364925.1"/>
</dbReference>
<dbReference type="UCSC" id="uc004cyq.4">
    <molecule id="O14829-1"/>
    <property type="organism name" value="human"/>
</dbReference>
<dbReference type="AGR" id="HGNC:9243"/>
<dbReference type="CTD" id="5475"/>
<dbReference type="DisGeNET" id="5475"/>
<dbReference type="GeneCards" id="PPEF1"/>
<dbReference type="HGNC" id="HGNC:9243">
    <property type="gene designation" value="PPEF1"/>
</dbReference>
<dbReference type="HPA" id="ENSG00000086717">
    <property type="expression patterns" value="Group enriched (brain, breast, testis)"/>
</dbReference>
<dbReference type="MIM" id="300109">
    <property type="type" value="gene"/>
</dbReference>
<dbReference type="neXtProt" id="NX_O14829"/>
<dbReference type="OpenTargets" id="ENSG00000086717"/>
<dbReference type="PharmGKB" id="PA33564"/>
<dbReference type="VEuPathDB" id="HostDB:ENSG00000086717"/>
<dbReference type="eggNOG" id="KOG0377">
    <property type="taxonomic scope" value="Eukaryota"/>
</dbReference>
<dbReference type="GeneTree" id="ENSGT00940000159830"/>
<dbReference type="HOGENOM" id="CLU_012603_1_0_1"/>
<dbReference type="InParanoid" id="O14829"/>
<dbReference type="OMA" id="SHDNEIN"/>
<dbReference type="OrthoDB" id="442428at2759"/>
<dbReference type="PAN-GO" id="O14829">
    <property type="GO annotations" value="3 GO annotations based on evolutionary models"/>
</dbReference>
<dbReference type="PhylomeDB" id="O14829"/>
<dbReference type="TreeFam" id="TF313342"/>
<dbReference type="PathwayCommons" id="O14829"/>
<dbReference type="Reactome" id="R-HSA-2514859">
    <property type="pathway name" value="Inactivation, recovery and regulation of the phototransduction cascade"/>
</dbReference>
<dbReference type="SignaLink" id="O14829"/>
<dbReference type="SIGNOR" id="O14829"/>
<dbReference type="BioGRID-ORCS" id="5475">
    <property type="hits" value="10 hits in 787 CRISPR screens"/>
</dbReference>
<dbReference type="ChiTaRS" id="PPEF1">
    <property type="organism name" value="human"/>
</dbReference>
<dbReference type="GeneWiki" id="PPEF1"/>
<dbReference type="GenomeRNAi" id="5475"/>
<dbReference type="Pharos" id="O14829">
    <property type="development level" value="Tbio"/>
</dbReference>
<dbReference type="PRO" id="PR:O14829"/>
<dbReference type="Proteomes" id="UP000005640">
    <property type="component" value="Chromosome X"/>
</dbReference>
<dbReference type="RNAct" id="O14829">
    <property type="molecule type" value="protein"/>
</dbReference>
<dbReference type="Bgee" id="ENSG00000086717">
    <property type="expression patterns" value="Expressed in sperm and 120 other cell types or tissues"/>
</dbReference>
<dbReference type="ExpressionAtlas" id="O14829">
    <property type="expression patterns" value="baseline and differential"/>
</dbReference>
<dbReference type="GO" id="GO:0005829">
    <property type="term" value="C:cytosol"/>
    <property type="evidence" value="ECO:0000318"/>
    <property type="project" value="GO_Central"/>
</dbReference>
<dbReference type="GO" id="GO:0005634">
    <property type="term" value="C:nucleus"/>
    <property type="evidence" value="ECO:0000318"/>
    <property type="project" value="GO_Central"/>
</dbReference>
<dbReference type="GO" id="GO:0005509">
    <property type="term" value="F:calcium ion binding"/>
    <property type="evidence" value="ECO:0007669"/>
    <property type="project" value="InterPro"/>
</dbReference>
<dbReference type="GO" id="GO:0005506">
    <property type="term" value="F:iron ion binding"/>
    <property type="evidence" value="ECO:0007669"/>
    <property type="project" value="InterPro"/>
</dbReference>
<dbReference type="GO" id="GO:0030145">
    <property type="term" value="F:manganese ion binding"/>
    <property type="evidence" value="ECO:0007669"/>
    <property type="project" value="InterPro"/>
</dbReference>
<dbReference type="GO" id="GO:0004722">
    <property type="term" value="F:protein serine/threonine phosphatase activity"/>
    <property type="evidence" value="ECO:0000318"/>
    <property type="project" value="GO_Central"/>
</dbReference>
<dbReference type="GO" id="GO:0050906">
    <property type="term" value="P:detection of stimulus involved in sensory perception"/>
    <property type="evidence" value="ECO:0007669"/>
    <property type="project" value="InterPro"/>
</dbReference>
<dbReference type="GO" id="GO:0006470">
    <property type="term" value="P:protein dephosphorylation"/>
    <property type="evidence" value="ECO:0000304"/>
    <property type="project" value="ProtInc"/>
</dbReference>
<dbReference type="CDD" id="cd00051">
    <property type="entry name" value="EFh"/>
    <property type="match status" value="1"/>
</dbReference>
<dbReference type="CDD" id="cd23767">
    <property type="entry name" value="IQCD"/>
    <property type="match status" value="1"/>
</dbReference>
<dbReference type="CDD" id="cd07420">
    <property type="entry name" value="MPP_RdgC"/>
    <property type="match status" value="1"/>
</dbReference>
<dbReference type="FunFam" id="1.10.238.10:FF:000164">
    <property type="entry name" value="Serine/threonine-protein phosphatase with EF-hands"/>
    <property type="match status" value="1"/>
</dbReference>
<dbReference type="Gene3D" id="3.60.21.10">
    <property type="match status" value="1"/>
</dbReference>
<dbReference type="Gene3D" id="1.10.238.10">
    <property type="entry name" value="EF-hand"/>
    <property type="match status" value="1"/>
</dbReference>
<dbReference type="InterPro" id="IPR004843">
    <property type="entry name" value="Calcineurin-like_PHP_ApaH"/>
</dbReference>
<dbReference type="InterPro" id="IPR011992">
    <property type="entry name" value="EF-hand-dom_pair"/>
</dbReference>
<dbReference type="InterPro" id="IPR018247">
    <property type="entry name" value="EF_Hand_1_Ca_BS"/>
</dbReference>
<dbReference type="InterPro" id="IPR002048">
    <property type="entry name" value="EF_hand_dom"/>
</dbReference>
<dbReference type="InterPro" id="IPR000048">
    <property type="entry name" value="IQ_motif_EF-hand-BS"/>
</dbReference>
<dbReference type="InterPro" id="IPR029052">
    <property type="entry name" value="Metallo-depent_PP-like"/>
</dbReference>
<dbReference type="InterPro" id="IPR013235">
    <property type="entry name" value="PPP_dom"/>
</dbReference>
<dbReference type="InterPro" id="IPR051134">
    <property type="entry name" value="PPP_phosphatase"/>
</dbReference>
<dbReference type="InterPro" id="IPR012008">
    <property type="entry name" value="Ser/Thr-Pase_EF-hand_contain"/>
</dbReference>
<dbReference type="InterPro" id="IPR006186">
    <property type="entry name" value="Ser/Thr-sp_prot-phosphatase"/>
</dbReference>
<dbReference type="PANTHER" id="PTHR45668">
    <property type="entry name" value="SERINE/THREONINE-PROTEIN PHOSPHATASE 5-RELATED"/>
    <property type="match status" value="1"/>
</dbReference>
<dbReference type="PANTHER" id="PTHR45668:SF1">
    <property type="entry name" value="SERINE_THREONINE-PROTEIN PHOSPHATASE WITH EF-HANDS 1"/>
    <property type="match status" value="1"/>
</dbReference>
<dbReference type="Pfam" id="PF13499">
    <property type="entry name" value="EF-hand_7"/>
    <property type="match status" value="1"/>
</dbReference>
<dbReference type="Pfam" id="PF00612">
    <property type="entry name" value="IQ"/>
    <property type="match status" value="1"/>
</dbReference>
<dbReference type="Pfam" id="PF00149">
    <property type="entry name" value="Metallophos"/>
    <property type="match status" value="1"/>
</dbReference>
<dbReference type="Pfam" id="PF08321">
    <property type="entry name" value="PPP5"/>
    <property type="match status" value="1"/>
</dbReference>
<dbReference type="PIRSF" id="PIRSF000912">
    <property type="entry name" value="PPEF"/>
    <property type="match status" value="1"/>
</dbReference>
<dbReference type="PRINTS" id="PR00114">
    <property type="entry name" value="STPHPHTASE"/>
</dbReference>
<dbReference type="SMART" id="SM00054">
    <property type="entry name" value="EFh"/>
    <property type="match status" value="3"/>
</dbReference>
<dbReference type="SMART" id="SM00015">
    <property type="entry name" value="IQ"/>
    <property type="match status" value="1"/>
</dbReference>
<dbReference type="SMART" id="SM00156">
    <property type="entry name" value="PP2Ac"/>
    <property type="match status" value="1"/>
</dbReference>
<dbReference type="SUPFAM" id="SSF47473">
    <property type="entry name" value="EF-hand"/>
    <property type="match status" value="1"/>
</dbReference>
<dbReference type="SUPFAM" id="SSF56300">
    <property type="entry name" value="Metallo-dependent phosphatases"/>
    <property type="match status" value="1"/>
</dbReference>
<dbReference type="PROSITE" id="PS00018">
    <property type="entry name" value="EF_HAND_1"/>
    <property type="match status" value="2"/>
</dbReference>
<dbReference type="PROSITE" id="PS50222">
    <property type="entry name" value="EF_HAND_2"/>
    <property type="match status" value="3"/>
</dbReference>
<dbReference type="PROSITE" id="PS50096">
    <property type="entry name" value="IQ"/>
    <property type="match status" value="1"/>
</dbReference>
<dbReference type="PROSITE" id="PS00125">
    <property type="entry name" value="SER_THR_PHOSPHATASE"/>
    <property type="match status" value="1"/>
</dbReference>
<accession>O14829</accession>
<accession>A6NHP4</accession>
<accession>A8K348</accession>
<accession>O15253</accession>
<accession>Q9NU21</accession>
<accession>Q9UJH0</accession>
<reference key="1">
    <citation type="journal article" date="1997" name="Proc. Natl. Acad. Sci. U.S.A.">
        <title>Identification and characterization of a conserved family of protein serine/threonine phosphatases homologous to Drosophila retinal degeneration C.</title>
        <authorList>
            <person name="Sherman P.M."/>
            <person name="Sun H."/>
            <person name="Macke J.P."/>
            <person name="Williams J."/>
            <person name="Smallwood P.M."/>
            <person name="Nathans J."/>
        </authorList>
    </citation>
    <scope>NUCLEOTIDE SEQUENCE [MRNA]</scope>
    <source>
        <tissue>Retina</tissue>
    </source>
</reference>
<reference key="2">
    <citation type="journal article" date="1997" name="Hum. Mol. Genet.">
        <title>A novel human serine-threonine phosphatase related to the Drosophila retinal degeneration C (rdgC) gene is selectively expressed in sensory neurons of neural crest origin.</title>
        <authorList>
            <person name="Montini E."/>
            <person name="Rugarli E.I."/>
            <person name="van de Vosse E."/>
            <person name="Andolfi G."/>
            <person name="Mariani M."/>
            <person name="Puca A.A."/>
            <person name="Consales G.G."/>
            <person name="den Dunnen J.T."/>
            <person name="Ballabio A."/>
            <person name="Franco B."/>
        </authorList>
    </citation>
    <scope>NUCLEOTIDE SEQUENCE [MRNA]</scope>
    <scope>ALTERNATIVE SPLICING</scope>
    <scope>VARIANT THR-367</scope>
    <source>
        <tissue>Fetal brain</tissue>
    </source>
</reference>
<reference key="3">
    <citation type="journal article" date="1998" name="J. Biol. Chem.">
        <title>Molecular cloning, expression, and characterization of a novel human serine/threonine protein phosphatase, PP7, that is homologous to Drosophila retinal degeneration C gene product (rdgC).</title>
        <authorList>
            <person name="Huang X."/>
            <person name="Honkanen R.E."/>
        </authorList>
    </citation>
    <scope>NUCLEOTIDE SEQUENCE [MRNA]</scope>
    <source>
        <tissue>Retina</tissue>
    </source>
</reference>
<reference key="4">
    <citation type="journal article" date="2004" name="Nat. Genet.">
        <title>Complete sequencing and characterization of 21,243 full-length human cDNAs.</title>
        <authorList>
            <person name="Ota T."/>
            <person name="Suzuki Y."/>
            <person name="Nishikawa T."/>
            <person name="Otsuki T."/>
            <person name="Sugiyama T."/>
            <person name="Irie R."/>
            <person name="Wakamatsu A."/>
            <person name="Hayashi K."/>
            <person name="Sato H."/>
            <person name="Nagai K."/>
            <person name="Kimura K."/>
            <person name="Makita H."/>
            <person name="Sekine M."/>
            <person name="Obayashi M."/>
            <person name="Nishi T."/>
            <person name="Shibahara T."/>
            <person name="Tanaka T."/>
            <person name="Ishii S."/>
            <person name="Yamamoto J."/>
            <person name="Saito K."/>
            <person name="Kawai Y."/>
            <person name="Isono Y."/>
            <person name="Nakamura Y."/>
            <person name="Nagahari K."/>
            <person name="Murakami K."/>
            <person name="Yasuda T."/>
            <person name="Iwayanagi T."/>
            <person name="Wagatsuma M."/>
            <person name="Shiratori A."/>
            <person name="Sudo H."/>
            <person name="Hosoiri T."/>
            <person name="Kaku Y."/>
            <person name="Kodaira H."/>
            <person name="Kondo H."/>
            <person name="Sugawara M."/>
            <person name="Takahashi M."/>
            <person name="Kanda K."/>
            <person name="Yokoi T."/>
            <person name="Furuya T."/>
            <person name="Kikkawa E."/>
            <person name="Omura Y."/>
            <person name="Abe K."/>
            <person name="Kamihara K."/>
            <person name="Katsuta N."/>
            <person name="Sato K."/>
            <person name="Tanikawa M."/>
            <person name="Yamazaki M."/>
            <person name="Ninomiya K."/>
            <person name="Ishibashi T."/>
            <person name="Yamashita H."/>
            <person name="Murakawa K."/>
            <person name="Fujimori K."/>
            <person name="Tanai H."/>
            <person name="Kimata M."/>
            <person name="Watanabe M."/>
            <person name="Hiraoka S."/>
            <person name="Chiba Y."/>
            <person name="Ishida S."/>
            <person name="Ono Y."/>
            <person name="Takiguchi S."/>
            <person name="Watanabe S."/>
            <person name="Yosida M."/>
            <person name="Hotuta T."/>
            <person name="Kusano J."/>
            <person name="Kanehori K."/>
            <person name="Takahashi-Fujii A."/>
            <person name="Hara H."/>
            <person name="Tanase T.-O."/>
            <person name="Nomura Y."/>
            <person name="Togiya S."/>
            <person name="Komai F."/>
            <person name="Hara R."/>
            <person name="Takeuchi K."/>
            <person name="Arita M."/>
            <person name="Imose N."/>
            <person name="Musashino K."/>
            <person name="Yuuki H."/>
            <person name="Oshima A."/>
            <person name="Sasaki N."/>
            <person name="Aotsuka S."/>
            <person name="Yoshikawa Y."/>
            <person name="Matsunawa H."/>
            <person name="Ichihara T."/>
            <person name="Shiohata N."/>
            <person name="Sano S."/>
            <person name="Moriya S."/>
            <person name="Momiyama H."/>
            <person name="Satoh N."/>
            <person name="Takami S."/>
            <person name="Terashima Y."/>
            <person name="Suzuki O."/>
            <person name="Nakagawa S."/>
            <person name="Senoh A."/>
            <person name="Mizoguchi H."/>
            <person name="Goto Y."/>
            <person name="Shimizu F."/>
            <person name="Wakebe H."/>
            <person name="Hishigaki H."/>
            <person name="Watanabe T."/>
            <person name="Sugiyama A."/>
            <person name="Takemoto M."/>
            <person name="Kawakami B."/>
            <person name="Yamazaki M."/>
            <person name="Watanabe K."/>
            <person name="Kumagai A."/>
            <person name="Itakura S."/>
            <person name="Fukuzumi Y."/>
            <person name="Fujimori Y."/>
            <person name="Komiyama M."/>
            <person name="Tashiro H."/>
            <person name="Tanigami A."/>
            <person name="Fujiwara T."/>
            <person name="Ono T."/>
            <person name="Yamada K."/>
            <person name="Fujii Y."/>
            <person name="Ozaki K."/>
            <person name="Hirao M."/>
            <person name="Ohmori Y."/>
            <person name="Kawabata A."/>
            <person name="Hikiji T."/>
            <person name="Kobatake N."/>
            <person name="Inagaki H."/>
            <person name="Ikema Y."/>
            <person name="Okamoto S."/>
            <person name="Okitani R."/>
            <person name="Kawakami T."/>
            <person name="Noguchi S."/>
            <person name="Itoh T."/>
            <person name="Shigeta K."/>
            <person name="Senba T."/>
            <person name="Matsumura K."/>
            <person name="Nakajima Y."/>
            <person name="Mizuno T."/>
            <person name="Morinaga M."/>
            <person name="Sasaki M."/>
            <person name="Togashi T."/>
            <person name="Oyama M."/>
            <person name="Hata H."/>
            <person name="Watanabe M."/>
            <person name="Komatsu T."/>
            <person name="Mizushima-Sugano J."/>
            <person name="Satoh T."/>
            <person name="Shirai Y."/>
            <person name="Takahashi Y."/>
            <person name="Nakagawa K."/>
            <person name="Okumura K."/>
            <person name="Nagase T."/>
            <person name="Nomura N."/>
            <person name="Kikuchi H."/>
            <person name="Masuho Y."/>
            <person name="Yamashita R."/>
            <person name="Nakai K."/>
            <person name="Yada T."/>
            <person name="Nakamura Y."/>
            <person name="Ohara O."/>
            <person name="Isogai T."/>
            <person name="Sugano S."/>
        </authorList>
    </citation>
    <scope>NUCLEOTIDE SEQUENCE [LARGE SCALE MRNA]</scope>
    <source>
        <tissue>Brain</tissue>
    </source>
</reference>
<reference key="5">
    <citation type="journal article" date="2005" name="Nature">
        <title>The DNA sequence of the human X chromosome.</title>
        <authorList>
            <person name="Ross M.T."/>
            <person name="Grafham D.V."/>
            <person name="Coffey A.J."/>
            <person name="Scherer S."/>
            <person name="McLay K."/>
            <person name="Muzny D."/>
            <person name="Platzer M."/>
            <person name="Howell G.R."/>
            <person name="Burrows C."/>
            <person name="Bird C.P."/>
            <person name="Frankish A."/>
            <person name="Lovell F.L."/>
            <person name="Howe K.L."/>
            <person name="Ashurst J.L."/>
            <person name="Fulton R.S."/>
            <person name="Sudbrak R."/>
            <person name="Wen G."/>
            <person name="Jones M.C."/>
            <person name="Hurles M.E."/>
            <person name="Andrews T.D."/>
            <person name="Scott C.E."/>
            <person name="Searle S."/>
            <person name="Ramser J."/>
            <person name="Whittaker A."/>
            <person name="Deadman R."/>
            <person name="Carter N.P."/>
            <person name="Hunt S.E."/>
            <person name="Chen R."/>
            <person name="Cree A."/>
            <person name="Gunaratne P."/>
            <person name="Havlak P."/>
            <person name="Hodgson A."/>
            <person name="Metzker M.L."/>
            <person name="Richards S."/>
            <person name="Scott G."/>
            <person name="Steffen D."/>
            <person name="Sodergren E."/>
            <person name="Wheeler D.A."/>
            <person name="Worley K.C."/>
            <person name="Ainscough R."/>
            <person name="Ambrose K.D."/>
            <person name="Ansari-Lari M.A."/>
            <person name="Aradhya S."/>
            <person name="Ashwell R.I."/>
            <person name="Babbage A.K."/>
            <person name="Bagguley C.L."/>
            <person name="Ballabio A."/>
            <person name="Banerjee R."/>
            <person name="Barker G.E."/>
            <person name="Barlow K.F."/>
            <person name="Barrett I.P."/>
            <person name="Bates K.N."/>
            <person name="Beare D.M."/>
            <person name="Beasley H."/>
            <person name="Beasley O."/>
            <person name="Beck A."/>
            <person name="Bethel G."/>
            <person name="Blechschmidt K."/>
            <person name="Brady N."/>
            <person name="Bray-Allen S."/>
            <person name="Bridgeman A.M."/>
            <person name="Brown A.J."/>
            <person name="Brown M.J."/>
            <person name="Bonnin D."/>
            <person name="Bruford E.A."/>
            <person name="Buhay C."/>
            <person name="Burch P."/>
            <person name="Burford D."/>
            <person name="Burgess J."/>
            <person name="Burrill W."/>
            <person name="Burton J."/>
            <person name="Bye J.M."/>
            <person name="Carder C."/>
            <person name="Carrel L."/>
            <person name="Chako J."/>
            <person name="Chapman J.C."/>
            <person name="Chavez D."/>
            <person name="Chen E."/>
            <person name="Chen G."/>
            <person name="Chen Y."/>
            <person name="Chen Z."/>
            <person name="Chinault C."/>
            <person name="Ciccodicola A."/>
            <person name="Clark S.Y."/>
            <person name="Clarke G."/>
            <person name="Clee C.M."/>
            <person name="Clegg S."/>
            <person name="Clerc-Blankenburg K."/>
            <person name="Clifford K."/>
            <person name="Cobley V."/>
            <person name="Cole C.G."/>
            <person name="Conquer J.S."/>
            <person name="Corby N."/>
            <person name="Connor R.E."/>
            <person name="David R."/>
            <person name="Davies J."/>
            <person name="Davis C."/>
            <person name="Davis J."/>
            <person name="Delgado O."/>
            <person name="Deshazo D."/>
            <person name="Dhami P."/>
            <person name="Ding Y."/>
            <person name="Dinh H."/>
            <person name="Dodsworth S."/>
            <person name="Draper H."/>
            <person name="Dugan-Rocha S."/>
            <person name="Dunham A."/>
            <person name="Dunn M."/>
            <person name="Durbin K.J."/>
            <person name="Dutta I."/>
            <person name="Eades T."/>
            <person name="Ellwood M."/>
            <person name="Emery-Cohen A."/>
            <person name="Errington H."/>
            <person name="Evans K.L."/>
            <person name="Faulkner L."/>
            <person name="Francis F."/>
            <person name="Frankland J."/>
            <person name="Fraser A.E."/>
            <person name="Galgoczy P."/>
            <person name="Gilbert J."/>
            <person name="Gill R."/>
            <person name="Gloeckner G."/>
            <person name="Gregory S.G."/>
            <person name="Gribble S."/>
            <person name="Griffiths C."/>
            <person name="Grocock R."/>
            <person name="Gu Y."/>
            <person name="Gwilliam R."/>
            <person name="Hamilton C."/>
            <person name="Hart E.A."/>
            <person name="Hawes A."/>
            <person name="Heath P.D."/>
            <person name="Heitmann K."/>
            <person name="Hennig S."/>
            <person name="Hernandez J."/>
            <person name="Hinzmann B."/>
            <person name="Ho S."/>
            <person name="Hoffs M."/>
            <person name="Howden P.J."/>
            <person name="Huckle E.J."/>
            <person name="Hume J."/>
            <person name="Hunt P.J."/>
            <person name="Hunt A.R."/>
            <person name="Isherwood J."/>
            <person name="Jacob L."/>
            <person name="Johnson D."/>
            <person name="Jones S."/>
            <person name="de Jong P.J."/>
            <person name="Joseph S.S."/>
            <person name="Keenan S."/>
            <person name="Kelly S."/>
            <person name="Kershaw J.K."/>
            <person name="Khan Z."/>
            <person name="Kioschis P."/>
            <person name="Klages S."/>
            <person name="Knights A.J."/>
            <person name="Kosiura A."/>
            <person name="Kovar-Smith C."/>
            <person name="Laird G.K."/>
            <person name="Langford C."/>
            <person name="Lawlor S."/>
            <person name="Leversha M."/>
            <person name="Lewis L."/>
            <person name="Liu W."/>
            <person name="Lloyd C."/>
            <person name="Lloyd D.M."/>
            <person name="Loulseged H."/>
            <person name="Loveland J.E."/>
            <person name="Lovell J.D."/>
            <person name="Lozado R."/>
            <person name="Lu J."/>
            <person name="Lyne R."/>
            <person name="Ma J."/>
            <person name="Maheshwari M."/>
            <person name="Matthews L.H."/>
            <person name="McDowall J."/>
            <person name="McLaren S."/>
            <person name="McMurray A."/>
            <person name="Meidl P."/>
            <person name="Meitinger T."/>
            <person name="Milne S."/>
            <person name="Miner G."/>
            <person name="Mistry S.L."/>
            <person name="Morgan M."/>
            <person name="Morris S."/>
            <person name="Mueller I."/>
            <person name="Mullikin J.C."/>
            <person name="Nguyen N."/>
            <person name="Nordsiek G."/>
            <person name="Nyakatura G."/>
            <person name="O'dell C.N."/>
            <person name="Okwuonu G."/>
            <person name="Palmer S."/>
            <person name="Pandian R."/>
            <person name="Parker D."/>
            <person name="Parrish J."/>
            <person name="Pasternak S."/>
            <person name="Patel D."/>
            <person name="Pearce A.V."/>
            <person name="Pearson D.M."/>
            <person name="Pelan S.E."/>
            <person name="Perez L."/>
            <person name="Porter K.M."/>
            <person name="Ramsey Y."/>
            <person name="Reichwald K."/>
            <person name="Rhodes S."/>
            <person name="Ridler K.A."/>
            <person name="Schlessinger D."/>
            <person name="Schueler M.G."/>
            <person name="Sehra H.K."/>
            <person name="Shaw-Smith C."/>
            <person name="Shen H."/>
            <person name="Sheridan E.M."/>
            <person name="Shownkeen R."/>
            <person name="Skuce C.D."/>
            <person name="Smith M.L."/>
            <person name="Sotheran E.C."/>
            <person name="Steingruber H.E."/>
            <person name="Steward C.A."/>
            <person name="Storey R."/>
            <person name="Swann R.M."/>
            <person name="Swarbreck D."/>
            <person name="Tabor P.E."/>
            <person name="Taudien S."/>
            <person name="Taylor T."/>
            <person name="Teague B."/>
            <person name="Thomas K."/>
            <person name="Thorpe A."/>
            <person name="Timms K."/>
            <person name="Tracey A."/>
            <person name="Trevanion S."/>
            <person name="Tromans A.C."/>
            <person name="d'Urso M."/>
            <person name="Verduzco D."/>
            <person name="Villasana D."/>
            <person name="Waldron L."/>
            <person name="Wall M."/>
            <person name="Wang Q."/>
            <person name="Warren J."/>
            <person name="Warry G.L."/>
            <person name="Wei X."/>
            <person name="West A."/>
            <person name="Whitehead S.L."/>
            <person name="Whiteley M.N."/>
            <person name="Wilkinson J.E."/>
            <person name="Willey D.L."/>
            <person name="Williams G."/>
            <person name="Williams L."/>
            <person name="Williamson A."/>
            <person name="Williamson H."/>
            <person name="Wilming L."/>
            <person name="Woodmansey R.L."/>
            <person name="Wray P.W."/>
            <person name="Yen J."/>
            <person name="Zhang J."/>
            <person name="Zhou J."/>
            <person name="Zoghbi H."/>
            <person name="Zorilla S."/>
            <person name="Buck D."/>
            <person name="Reinhardt R."/>
            <person name="Poustka A."/>
            <person name="Rosenthal A."/>
            <person name="Lehrach H."/>
            <person name="Meindl A."/>
            <person name="Minx P.J."/>
            <person name="Hillier L.W."/>
            <person name="Willard H.F."/>
            <person name="Wilson R.K."/>
            <person name="Waterston R.H."/>
            <person name="Rice C.M."/>
            <person name="Vaudin M."/>
            <person name="Coulson A."/>
            <person name="Nelson D.L."/>
            <person name="Weinstock G."/>
            <person name="Sulston J.E."/>
            <person name="Durbin R.M."/>
            <person name="Hubbard T."/>
            <person name="Gibbs R.A."/>
            <person name="Beck S."/>
            <person name="Rogers J."/>
            <person name="Bentley D.R."/>
        </authorList>
    </citation>
    <scope>NUCLEOTIDE SEQUENCE [LARGE SCALE GENOMIC DNA]</scope>
</reference>
<reference key="6">
    <citation type="submission" date="2005-07" db="EMBL/GenBank/DDBJ databases">
        <authorList>
            <person name="Mural R.J."/>
            <person name="Istrail S."/>
            <person name="Sutton G.G."/>
            <person name="Florea L."/>
            <person name="Halpern A.L."/>
            <person name="Mobarry C.M."/>
            <person name="Lippert R."/>
            <person name="Walenz B."/>
            <person name="Shatkay H."/>
            <person name="Dew I."/>
            <person name="Miller J.R."/>
            <person name="Flanigan M.J."/>
            <person name="Edwards N.J."/>
            <person name="Bolanos R."/>
            <person name="Fasulo D."/>
            <person name="Halldorsson B.V."/>
            <person name="Hannenhalli S."/>
            <person name="Turner R."/>
            <person name="Yooseph S."/>
            <person name="Lu F."/>
            <person name="Nusskern D.R."/>
            <person name="Shue B.C."/>
            <person name="Zheng X.H."/>
            <person name="Zhong F."/>
            <person name="Delcher A.L."/>
            <person name="Huson D.H."/>
            <person name="Kravitz S.A."/>
            <person name="Mouchard L."/>
            <person name="Reinert K."/>
            <person name="Remington K.A."/>
            <person name="Clark A.G."/>
            <person name="Waterman M.S."/>
            <person name="Eichler E.E."/>
            <person name="Adams M.D."/>
            <person name="Hunkapiller M.W."/>
            <person name="Myers E.W."/>
            <person name="Venter J.C."/>
        </authorList>
    </citation>
    <scope>NUCLEOTIDE SEQUENCE [LARGE SCALE GENOMIC DNA]</scope>
</reference>
<reference key="7">
    <citation type="journal article" date="2004" name="Genome Res.">
        <title>The status, quality, and expansion of the NIH full-length cDNA project: the Mammalian Gene Collection (MGC).</title>
        <authorList>
            <consortium name="The MGC Project Team"/>
        </authorList>
    </citation>
    <scope>NUCLEOTIDE SEQUENCE [LARGE SCALE MRNA] (ISOFORM 1)</scope>
    <source>
        <tissue>Testis</tissue>
    </source>
</reference>
<reference key="8">
    <citation type="journal article" date="2004" name="Genome Biol.">
        <title>An unappreciated role for RNA surveillance.</title>
        <authorList>
            <person name="Hillman R.T."/>
            <person name="Green R.E."/>
            <person name="Brenner S.E."/>
        </authorList>
    </citation>
    <scope>SPLICE ISOFORM(S) THAT ARE POTENTIAL NMD TARGET(S)</scope>
</reference>
<comment type="function">
    <text>May have a role in the recovery or adaptation response of photoreceptors. May have a role in development.</text>
</comment>
<comment type="catalytic activity">
    <reaction>
        <text>O-phospho-L-seryl-[protein] + H2O = L-seryl-[protein] + phosphate</text>
        <dbReference type="Rhea" id="RHEA:20629"/>
        <dbReference type="Rhea" id="RHEA-COMP:9863"/>
        <dbReference type="Rhea" id="RHEA-COMP:11604"/>
        <dbReference type="ChEBI" id="CHEBI:15377"/>
        <dbReference type="ChEBI" id="CHEBI:29999"/>
        <dbReference type="ChEBI" id="CHEBI:43474"/>
        <dbReference type="ChEBI" id="CHEBI:83421"/>
        <dbReference type="EC" id="3.1.3.16"/>
    </reaction>
</comment>
<comment type="catalytic activity">
    <reaction>
        <text>O-phospho-L-threonyl-[protein] + H2O = L-threonyl-[protein] + phosphate</text>
        <dbReference type="Rhea" id="RHEA:47004"/>
        <dbReference type="Rhea" id="RHEA-COMP:11060"/>
        <dbReference type="Rhea" id="RHEA-COMP:11605"/>
        <dbReference type="ChEBI" id="CHEBI:15377"/>
        <dbReference type="ChEBI" id="CHEBI:30013"/>
        <dbReference type="ChEBI" id="CHEBI:43474"/>
        <dbReference type="ChEBI" id="CHEBI:61977"/>
        <dbReference type="EC" id="3.1.3.16"/>
    </reaction>
</comment>
<comment type="cofactor">
    <cofactor evidence="1">
        <name>Mn(2+)</name>
        <dbReference type="ChEBI" id="CHEBI:29035"/>
    </cofactor>
    <text evidence="1">Binds 2 manganese ions per subunit.</text>
</comment>
<comment type="cofactor">
    <cofactor evidence="1">
        <name>Mg(2+)</name>
        <dbReference type="ChEBI" id="CHEBI:18420"/>
    </cofactor>
</comment>
<comment type="activity regulation">
    <text>Activated by calcium.</text>
</comment>
<comment type="biophysicochemical properties">
    <phDependence>
        <text>Optimum pH is 8.0.</text>
    </phDependence>
</comment>
<comment type="interaction">
    <interactant intactId="EBI-2931238">
        <id>O14829</id>
    </interactant>
    <interactant intactId="EBI-2371423">
        <id>O43865</id>
        <label>AHCYL1</label>
    </interactant>
    <organismsDiffer>false</organismsDiffer>
    <experiments>3</experiments>
</comment>
<comment type="interaction">
    <interactant intactId="EBI-2931238">
        <id>O14829</id>
    </interactant>
    <interactant intactId="EBI-397435">
        <id>P62158</id>
        <label>CALM3</label>
    </interactant>
    <organismsDiffer>false</organismsDiffer>
    <experiments>2</experiments>
</comment>
<comment type="interaction">
    <interactant intactId="EBI-2931238">
        <id>O14829</id>
    </interactant>
    <interactant intactId="EBI-1049597">
        <id>P27797</id>
        <label>CALR</label>
    </interactant>
    <organismsDiffer>false</organismsDiffer>
    <experiments>3</experiments>
</comment>
<comment type="interaction">
    <interactant intactId="EBI-2931238">
        <id>O14829</id>
    </interactant>
    <interactant intactId="EBI-351007">
        <id>P36957</id>
        <label>DLST</label>
    </interactant>
    <organismsDiffer>false</organismsDiffer>
    <experiments>3</experiments>
</comment>
<comment type="interaction">
    <interactant intactId="EBI-2931238">
        <id>O14829</id>
    </interactant>
    <interactant intactId="EBI-1055945">
        <id>Q8TDX7</id>
        <label>NEK7</label>
    </interactant>
    <organismsDiffer>false</organismsDiffer>
    <experiments>3</experiments>
</comment>
<comment type="interaction">
    <interactant intactId="EBI-2931238">
        <id>O14829</id>
    </interactant>
    <interactant intactId="EBI-397460">
        <id>P62204</id>
        <label>Calm3</label>
    </interactant>
    <organismsDiffer>true</organismsDiffer>
    <experiments>2</experiments>
</comment>
<comment type="alternative products">
    <event type="alternative splicing"/>
    <isoform>
        <id>O14829-1</id>
        <name>1</name>
        <sequence type="displayed"/>
    </isoform>
    <isoform>
        <id>O14829-2</id>
        <name>1A</name>
        <sequence type="described" ref="VSP_005098"/>
    </isoform>
    <isoform>
        <id>O14829-3</id>
        <name>1B</name>
        <sequence type="described" ref="VSP_005099"/>
    </isoform>
    <isoform>
        <id>O14829-4</id>
        <name>2</name>
        <sequence type="described" ref="VSP_005100 VSP_005101"/>
    </isoform>
    <isoform>
        <id>O14829-5</id>
        <name>3</name>
        <sequence type="described" ref="VSP_005102"/>
    </isoform>
</comment>
<comment type="tissue specificity">
    <text>Detected in retina and retinal derived Y-79 retinoblastoma cells. Also found in fetal brain.</text>
</comment>
<comment type="miscellaneous">
    <molecule>Isoform 2</molecule>
    <text evidence="5">May be produced at very low levels due to a premature stop codon in the mRNA, leading to nonsense-mediated mRNA decay.</text>
</comment>
<comment type="miscellaneous">
    <molecule>Isoform 3</molecule>
    <text evidence="5">May have no functional significance.</text>
</comment>
<comment type="similarity">
    <text evidence="5">Belongs to the PPP phosphatase family.</text>
</comment>
<evidence type="ECO:0000250" key="1"/>
<evidence type="ECO:0000255" key="2">
    <source>
        <dbReference type="PROSITE-ProRule" id="PRU00116"/>
    </source>
</evidence>
<evidence type="ECO:0000255" key="3">
    <source>
        <dbReference type="PROSITE-ProRule" id="PRU00448"/>
    </source>
</evidence>
<evidence type="ECO:0000269" key="4">
    <source>
    </source>
</evidence>
<evidence type="ECO:0000305" key="5"/>
<name>PPE1_HUMAN</name>
<organism>
    <name type="scientific">Homo sapiens</name>
    <name type="common">Human</name>
    <dbReference type="NCBI Taxonomy" id="9606"/>
    <lineage>
        <taxon>Eukaryota</taxon>
        <taxon>Metazoa</taxon>
        <taxon>Chordata</taxon>
        <taxon>Craniata</taxon>
        <taxon>Vertebrata</taxon>
        <taxon>Euteleostomi</taxon>
        <taxon>Mammalia</taxon>
        <taxon>Eutheria</taxon>
        <taxon>Euarchontoglires</taxon>
        <taxon>Primates</taxon>
        <taxon>Haplorrhini</taxon>
        <taxon>Catarrhini</taxon>
        <taxon>Hominidae</taxon>
        <taxon>Homo</taxon>
    </lineage>
</organism>
<protein>
    <recommendedName>
        <fullName>Serine/threonine-protein phosphatase with EF-hands 1</fullName>
        <shortName>PPEF-1</shortName>
        <ecNumber>3.1.3.16</ecNumber>
    </recommendedName>
    <alternativeName>
        <fullName>Protein phosphatase with EF calcium-binding domain</fullName>
        <shortName>PPEF</shortName>
    </alternativeName>
    <alternativeName>
        <fullName>Serine/threonine-protein phosphatase 7</fullName>
        <shortName>PP7</shortName>
    </alternativeName>
</protein>
<proteinExistence type="evidence at protein level"/>
<gene>
    <name type="primary">PPEF1</name>
    <name type="synonym">PPEF</name>
    <name type="synonym">PPP7C</name>
</gene>
<feature type="chain" id="PRO_0000058899" description="Serine/threonine-protein phosphatase with EF-hands 1">
    <location>
        <begin position="1"/>
        <end position="653"/>
    </location>
</feature>
<feature type="domain" description="IQ" evidence="2">
    <location>
        <begin position="16"/>
        <end position="45"/>
    </location>
</feature>
<feature type="domain" description="EF-hand 1" evidence="3">
    <location>
        <begin position="483"/>
        <end position="518"/>
    </location>
</feature>
<feature type="domain" description="EF-hand 2" evidence="3">
    <location>
        <begin position="566"/>
        <end position="601"/>
    </location>
</feature>
<feature type="domain" description="EF-hand 3" evidence="3">
    <location>
        <begin position="606"/>
        <end position="641"/>
    </location>
</feature>
<feature type="region of interest" description="Catalytic">
    <location>
        <begin position="121"/>
        <end position="455"/>
    </location>
</feature>
<feature type="active site" description="Proton donor" evidence="1">
    <location>
        <position position="234"/>
    </location>
</feature>
<feature type="binding site" evidence="1">
    <location>
        <position position="172"/>
    </location>
    <ligand>
        <name>Mn(2+)</name>
        <dbReference type="ChEBI" id="CHEBI:29035"/>
        <label>1</label>
    </ligand>
</feature>
<feature type="binding site" evidence="1">
    <location>
        <position position="174"/>
    </location>
    <ligand>
        <name>Mn(2+)</name>
        <dbReference type="ChEBI" id="CHEBI:29035"/>
        <label>1</label>
    </ligand>
</feature>
<feature type="binding site" evidence="1">
    <location>
        <position position="201"/>
    </location>
    <ligand>
        <name>Mn(2+)</name>
        <dbReference type="ChEBI" id="CHEBI:29035"/>
        <label>1</label>
    </ligand>
</feature>
<feature type="binding site" evidence="1">
    <location>
        <position position="201"/>
    </location>
    <ligand>
        <name>Mn(2+)</name>
        <dbReference type="ChEBI" id="CHEBI:29035"/>
        <label>2</label>
    </ligand>
</feature>
<feature type="binding site" evidence="1">
    <location>
        <position position="233"/>
    </location>
    <ligand>
        <name>Mn(2+)</name>
        <dbReference type="ChEBI" id="CHEBI:29035"/>
        <label>2</label>
    </ligand>
</feature>
<feature type="binding site" evidence="1">
    <location>
        <position position="285"/>
    </location>
    <ligand>
        <name>Mn(2+)</name>
        <dbReference type="ChEBI" id="CHEBI:29035"/>
        <label>2</label>
    </ligand>
</feature>
<feature type="binding site" evidence="1">
    <location>
        <position position="403"/>
    </location>
    <ligand>
        <name>Mn(2+)</name>
        <dbReference type="ChEBI" id="CHEBI:29035"/>
        <label>2</label>
    </ligand>
</feature>
<feature type="binding site" evidence="3">
    <location>
        <position position="579"/>
    </location>
    <ligand>
        <name>Ca(2+)</name>
        <dbReference type="ChEBI" id="CHEBI:29108"/>
        <label>1</label>
    </ligand>
</feature>
<feature type="binding site" evidence="3">
    <location>
        <position position="581"/>
    </location>
    <ligand>
        <name>Ca(2+)</name>
        <dbReference type="ChEBI" id="CHEBI:29108"/>
        <label>1</label>
    </ligand>
</feature>
<feature type="binding site" evidence="3">
    <location>
        <position position="583"/>
    </location>
    <ligand>
        <name>Ca(2+)</name>
        <dbReference type="ChEBI" id="CHEBI:29108"/>
        <label>1</label>
    </ligand>
</feature>
<feature type="binding site" evidence="3">
    <location>
        <position position="590"/>
    </location>
    <ligand>
        <name>Ca(2+)</name>
        <dbReference type="ChEBI" id="CHEBI:29108"/>
        <label>1</label>
    </ligand>
</feature>
<feature type="binding site" evidence="3">
    <location>
        <position position="619"/>
    </location>
    <ligand>
        <name>Ca(2+)</name>
        <dbReference type="ChEBI" id="CHEBI:29108"/>
        <label>2</label>
    </ligand>
</feature>
<feature type="binding site" evidence="3">
    <location>
        <position position="621"/>
    </location>
    <ligand>
        <name>Ca(2+)</name>
        <dbReference type="ChEBI" id="CHEBI:29108"/>
        <label>2</label>
    </ligand>
</feature>
<feature type="binding site" evidence="3">
    <location>
        <position position="623"/>
    </location>
    <ligand>
        <name>Ca(2+)</name>
        <dbReference type="ChEBI" id="CHEBI:29108"/>
        <label>2</label>
    </ligand>
</feature>
<feature type="binding site" evidence="3">
    <location>
        <position position="625"/>
    </location>
    <ligand>
        <name>Ca(2+)</name>
        <dbReference type="ChEBI" id="CHEBI:29108"/>
        <label>2</label>
    </ligand>
</feature>
<feature type="binding site" evidence="3">
    <location>
        <position position="630"/>
    </location>
    <ligand>
        <name>Ca(2+)</name>
        <dbReference type="ChEBI" id="CHEBI:29108"/>
        <label>2</label>
    </ligand>
</feature>
<feature type="splice variant" id="VSP_005098" description="In isoform 1A." evidence="5">
    <location>
        <begin position="79"/>
        <end position="132"/>
    </location>
</feature>
<feature type="splice variant" id="VSP_005099" description="In isoform 1B." evidence="5">
    <location>
        <begin position="328"/>
        <end position="355"/>
    </location>
</feature>
<feature type="splice variant" id="VSP_005102" description="In isoform 3." evidence="5">
    <location>
        <begin position="356"/>
        <end position="417"/>
    </location>
</feature>
<feature type="splice variant" id="VSP_005100" description="In isoform 2." evidence="5">
    <original>IIDILWSDPRGKNGCFPNTCR</original>
    <variation>SGYYGKQRHQDIKRESDFTKK</variation>
    <location>
        <begin position="356"/>
        <end position="376"/>
    </location>
</feature>
<feature type="splice variant" id="VSP_005101" description="In isoform 2." evidence="5">
    <location>
        <begin position="377"/>
        <end position="653"/>
    </location>
</feature>
<feature type="sequence variant" id="VAR_051736" description="In dbSNP:rs1065074." evidence="4">
    <original>K</original>
    <variation>T</variation>
    <location>
        <position position="367"/>
    </location>
</feature>
<feature type="sequence variant" id="VAR_051737" description="In dbSNP:rs11796620.">
    <original>G</original>
    <variation>S</variation>
    <location>
        <position position="443"/>
    </location>
</feature>
<keyword id="KW-0025">Alternative splicing</keyword>
<keyword id="KW-0106">Calcium</keyword>
<keyword id="KW-0378">Hydrolase</keyword>
<keyword id="KW-0460">Magnesium</keyword>
<keyword id="KW-0464">Manganese</keyword>
<keyword id="KW-0479">Metal-binding</keyword>
<keyword id="KW-0904">Protein phosphatase</keyword>
<keyword id="KW-1267">Proteomics identification</keyword>
<keyword id="KW-1185">Reference proteome</keyword>
<keyword id="KW-0677">Repeat</keyword>